<proteinExistence type="evidence at protein level"/>
<organism>
    <name type="scientific">Streptococcus pneumoniae (strain ATCC BAA-255 / R6)</name>
    <dbReference type="NCBI Taxonomy" id="171101"/>
    <lineage>
        <taxon>Bacteria</taxon>
        <taxon>Bacillati</taxon>
        <taxon>Bacillota</taxon>
        <taxon>Bacilli</taxon>
        <taxon>Lactobacillales</taxon>
        <taxon>Streptococcaceae</taxon>
        <taxon>Streptococcus</taxon>
    </lineage>
</organism>
<comment type="function">
    <text evidence="1">Functions as a peptidoglycan terminase that cleaves nascent peptidoglycan strands endolytically to terminate their elongation.</text>
</comment>
<comment type="function">
    <text evidence="3">Mutations in this gene suppress deletion of PBP2b (penA); truncation at residue 168, undefined changes between residue Ile-447 and Ala-505, and mutation of Ala-505 suppress the penA deletion. Probably part of the elongasome which synthesizes peripheral peptidoglycan.</text>
</comment>
<comment type="catalytic activity">
    <reaction evidence="1">
        <text>a peptidoglycan chain = a peptidoglycan chain with N-acetyl-1,6-anhydromuramyl-[peptide] at the reducing end + a peptidoglycan chain with N-acetylglucosamine at the non-reducing end.</text>
        <dbReference type="EC" id="4.2.2.29"/>
    </reaction>
</comment>
<comment type="subunit">
    <text evidence="3 4">Interacts with RodZ. Interacts with MreC in the elongasome; interaction is strongly reduced when the 90 C-terminal residues of MreC are missing (PubMed:28710862). Interacts with KhpB (also called EloR/Jag) via MltG's N-terminus, suggesting the N-terminus of MltG is cytoplasmic (PubMed:33558392).</text>
</comment>
<comment type="subcellular location">
    <subcellularLocation>
        <location evidence="1 3">Cell membrane</location>
        <topology evidence="1">Single-pass membrane protein</topology>
    </subcellularLocation>
    <text evidence="3">Localizes to midcell in the presence and absence of khpB (also called eloR/jag).</text>
</comment>
<comment type="disruption phenotype">
    <text evidence="4">Essential, it cannot be deleted.</text>
</comment>
<comment type="similarity">
    <text evidence="1">Belongs to the transglycosylase MltG family.</text>
</comment>
<dbReference type="EC" id="4.2.2.29" evidence="1"/>
<dbReference type="EMBL" id="AE007317">
    <property type="protein sequence ID" value="AAL00174.1"/>
    <property type="molecule type" value="Genomic_DNA"/>
</dbReference>
<dbReference type="PIR" id="A98043">
    <property type="entry name" value="A98043"/>
</dbReference>
<dbReference type="RefSeq" id="NP_358963.1">
    <property type="nucleotide sequence ID" value="NC_003098.1"/>
</dbReference>
<dbReference type="RefSeq" id="WP_001291640.1">
    <property type="nucleotide sequence ID" value="NC_003098.1"/>
</dbReference>
<dbReference type="SMR" id="Q8CYJ8"/>
<dbReference type="STRING" id="171101.spr1370"/>
<dbReference type="KEGG" id="spr:spr1370"/>
<dbReference type="PATRIC" id="fig|171101.6.peg.1485"/>
<dbReference type="eggNOG" id="COG1559">
    <property type="taxonomic scope" value="Bacteria"/>
</dbReference>
<dbReference type="HOGENOM" id="CLU_025574_1_0_9"/>
<dbReference type="Proteomes" id="UP000000586">
    <property type="component" value="Chromosome"/>
</dbReference>
<dbReference type="GO" id="GO:0005886">
    <property type="term" value="C:plasma membrane"/>
    <property type="evidence" value="ECO:0007669"/>
    <property type="project" value="UniProtKB-SubCell"/>
</dbReference>
<dbReference type="GO" id="GO:0008932">
    <property type="term" value="F:lytic endotransglycosylase activity"/>
    <property type="evidence" value="ECO:0007669"/>
    <property type="project" value="UniProtKB-UniRule"/>
</dbReference>
<dbReference type="GO" id="GO:0071555">
    <property type="term" value="P:cell wall organization"/>
    <property type="evidence" value="ECO:0007669"/>
    <property type="project" value="UniProtKB-KW"/>
</dbReference>
<dbReference type="GO" id="GO:0009252">
    <property type="term" value="P:peptidoglycan biosynthetic process"/>
    <property type="evidence" value="ECO:0007669"/>
    <property type="project" value="UniProtKB-UniRule"/>
</dbReference>
<dbReference type="CDD" id="cd08010">
    <property type="entry name" value="MltG_like"/>
    <property type="match status" value="1"/>
</dbReference>
<dbReference type="Gene3D" id="3.30.1490.480">
    <property type="entry name" value="Endolytic murein transglycosylase"/>
    <property type="match status" value="1"/>
</dbReference>
<dbReference type="HAMAP" id="MF_02065">
    <property type="entry name" value="MltG"/>
    <property type="match status" value="1"/>
</dbReference>
<dbReference type="InterPro" id="IPR003770">
    <property type="entry name" value="MLTG-like"/>
</dbReference>
<dbReference type="NCBIfam" id="TIGR00247">
    <property type="entry name" value="endolytic transglycosylase MltG"/>
    <property type="match status" value="1"/>
</dbReference>
<dbReference type="PANTHER" id="PTHR30518">
    <property type="entry name" value="ENDOLYTIC MUREIN TRANSGLYCOSYLASE"/>
    <property type="match status" value="1"/>
</dbReference>
<dbReference type="PANTHER" id="PTHR30518:SF2">
    <property type="entry name" value="ENDOLYTIC MUREIN TRANSGLYCOSYLASE"/>
    <property type="match status" value="1"/>
</dbReference>
<dbReference type="Pfam" id="PF02618">
    <property type="entry name" value="YceG"/>
    <property type="match status" value="1"/>
</dbReference>
<evidence type="ECO:0000255" key="1">
    <source>
        <dbReference type="HAMAP-Rule" id="MF_02065"/>
    </source>
</evidence>
<evidence type="ECO:0000256" key="2">
    <source>
        <dbReference type="SAM" id="MobiDB-lite"/>
    </source>
</evidence>
<evidence type="ECO:0000269" key="3">
    <source>
    </source>
</evidence>
<evidence type="ECO:0000269" key="4">
    <source>
    </source>
</evidence>
<evidence type="ECO:0000305" key="5">
    <source>
    </source>
</evidence>
<sequence length="551" mass="60813">MSEKSREEEKLSFKEQILRDLEKVKGYDEVLKEDEAVVRTPANEPSAEELMADSLSTVEEIMRKAPTVPTHPSQGVPASPADEIQRETPGVPSHPSQDVPSSPAEESGSRPGPGPVRPKKLEREYNETPTRVAVSYTTAEKKAEQAGPETPTPATETVDIIRDTSRRSRREGAKPAKPKKEKKSHVKAFVISFLVFLALLSAGGYFGYQYVLDSLLPIDANSKKYVTVGIPEGSNVQEIGTTLEKAGLVKHGLIFSFYAKYKNYTDLKAGYYNLQKSMSTEDLLKELQKGGTDEPQEPVLATLTIPEGYTLDQIAQTVGQLQGDFKESLTAEAFLAKVQDETFISQAVAKYPTLLESLPVKDSGARYRLEGYLFPATYSIKESTTIESLIDEMLAAMDKNLSLYYSTIKSKNLTVNELLTIASLVEKEGAKTEDRKLIAGVFYNRLNRDMPLQSNIAILYAQGKLGQNISLAEDVAIDTNIDSPYNVYKNVGLMPGPVDSPSLDAIESSINQTKSDNLYFVADVTEGKVYYANNQEDHDRNVAEHVNSKLN</sequence>
<name>MLTG_STRR6</name>
<accession>Q8CYJ8</accession>
<feature type="chain" id="PRO_0000454549" description="Endolytic murein transglycosylase">
    <location>
        <begin position="1"/>
        <end position="551"/>
    </location>
</feature>
<feature type="topological domain" description="Cytoplasmic" evidence="5">
    <location>
        <begin position="1"/>
        <end position="187"/>
    </location>
</feature>
<feature type="transmembrane region" description="Helical" evidence="1">
    <location>
        <begin position="188"/>
        <end position="208"/>
    </location>
</feature>
<feature type="topological domain" description="Extracellular" evidence="5">
    <location>
        <begin position="209"/>
        <end position="551"/>
    </location>
</feature>
<feature type="region of interest" description="Disordered" evidence="2">
    <location>
        <begin position="38"/>
        <end position="180"/>
    </location>
</feature>
<feature type="compositionally biased region" description="Low complexity" evidence="2">
    <location>
        <begin position="100"/>
        <end position="110"/>
    </location>
</feature>
<feature type="compositionally biased region" description="Low complexity" evidence="2">
    <location>
        <begin position="145"/>
        <end position="157"/>
    </location>
</feature>
<feature type="compositionally biased region" description="Basic and acidic residues" evidence="2">
    <location>
        <begin position="159"/>
        <end position="174"/>
    </location>
</feature>
<feature type="site" description="Important for catalytic activity" evidence="1">
    <location>
        <position position="428"/>
    </location>
</feature>
<feature type="mutagenesis site" description="Suppresses a PBP2b (penA) deletion." evidence="3">
    <original>A</original>
    <variation>V</variation>
    <location>
        <position position="505"/>
    </location>
</feature>
<gene>
    <name evidence="1" type="primary">mltG</name>
    <name type="ordered locus">spr1370</name>
</gene>
<keyword id="KW-1003">Cell membrane</keyword>
<keyword id="KW-0961">Cell wall biogenesis/degradation</keyword>
<keyword id="KW-0456">Lyase</keyword>
<keyword id="KW-0472">Membrane</keyword>
<keyword id="KW-1185">Reference proteome</keyword>
<keyword id="KW-0812">Transmembrane</keyword>
<keyword id="KW-1133">Transmembrane helix</keyword>
<protein>
    <recommendedName>
        <fullName evidence="1">Endolytic murein transglycosylase</fullName>
        <ecNumber evidence="1">4.2.2.29</ecNumber>
    </recommendedName>
    <alternativeName>
        <fullName evidence="1">Peptidoglycan lytic transglycosylase</fullName>
    </alternativeName>
    <alternativeName>
        <fullName evidence="1">Peptidoglycan polymerization terminase</fullName>
    </alternativeName>
</protein>
<reference key="1">
    <citation type="journal article" date="2001" name="J. Bacteriol.">
        <title>Genome of the bacterium Streptococcus pneumoniae strain R6.</title>
        <authorList>
            <person name="Hoskins J."/>
            <person name="Alborn W.E. Jr."/>
            <person name="Arnold J."/>
            <person name="Blaszczak L.C."/>
            <person name="Burgett S."/>
            <person name="DeHoff B.S."/>
            <person name="Estrem S.T."/>
            <person name="Fritz L."/>
            <person name="Fu D.-J."/>
            <person name="Fuller W."/>
            <person name="Geringer C."/>
            <person name="Gilmour R."/>
            <person name="Glass J.S."/>
            <person name="Khoja H."/>
            <person name="Kraft A.R."/>
            <person name="Lagace R.E."/>
            <person name="LeBlanc D.J."/>
            <person name="Lee L.N."/>
            <person name="Lefkowitz E.J."/>
            <person name="Lu J."/>
            <person name="Matsushima P."/>
            <person name="McAhren S.M."/>
            <person name="McHenney M."/>
            <person name="McLeaster K."/>
            <person name="Mundy C.W."/>
            <person name="Nicas T.I."/>
            <person name="Norris F.H."/>
            <person name="O'Gara M."/>
            <person name="Peery R.B."/>
            <person name="Robertson G.T."/>
            <person name="Rockey P."/>
            <person name="Sun P.-M."/>
            <person name="Winkler M.E."/>
            <person name="Yang Y."/>
            <person name="Young-Bellido M."/>
            <person name="Zhao G."/>
            <person name="Zook C.A."/>
            <person name="Baltz R.H."/>
            <person name="Jaskunas S.R."/>
            <person name="Rosteck P.R. Jr."/>
            <person name="Skatrud P.L."/>
            <person name="Glass J.I."/>
        </authorList>
    </citation>
    <scope>NUCLEOTIDE SEQUENCE [LARGE SCALE GENOMIC DNA]</scope>
    <source>
        <strain>ATCC BAA-255 / R6</strain>
    </source>
</reference>
<reference key="2">
    <citation type="journal article" date="2017" name="Mol. Microbiol.">
        <title>Identification of EloR (Spr1851) as a regulator of cell elongation in Streptococcus pneumoniae.</title>
        <authorList>
            <person name="Stamsaas G.A."/>
            <person name="Straume D."/>
            <person name="Ruud Winther A."/>
            <person name="Kjos M."/>
            <person name="Frantzen C.A."/>
            <person name="Haavarstein L.S."/>
        </authorList>
    </citation>
    <scope>FUNCTION</scope>
    <scope>SUBUNIT</scope>
    <scope>SUBCELLULAR LOCATION</scope>
    <scope>MUTAGENESIS OF ALA-505</scope>
    <source>
        <strain>R6 / R704</strain>
    </source>
</reference>
<reference key="3">
    <citation type="journal article" date="2021" name="J. Bacteriol.">
        <title>EloR interacts with the lytic transglycosylase MltG at midcell in Streptococcus pneumoniae R6.</title>
        <authorList>
            <person name="Winther A.R."/>
            <person name="Kjos M."/>
            <person name="Herigstad M.L."/>
            <person name="Haavarstein L.S."/>
            <person name="Straume D."/>
        </authorList>
    </citation>
    <scope>INTERACTION WITH KHPB</scope>
    <scope>DISRUPTION PHENOTYPE</scope>
    <scope>PROBABLE TOPOLOGY</scope>
    <source>
        <strain>R6 / R704</strain>
    </source>
</reference>